<organism>
    <name type="scientific">Aspergillus oryzae (strain ATCC 42149 / RIB 40)</name>
    <name type="common">Yellow koji mold</name>
    <dbReference type="NCBI Taxonomy" id="510516"/>
    <lineage>
        <taxon>Eukaryota</taxon>
        <taxon>Fungi</taxon>
        <taxon>Dikarya</taxon>
        <taxon>Ascomycota</taxon>
        <taxon>Pezizomycotina</taxon>
        <taxon>Eurotiomycetes</taxon>
        <taxon>Eurotiomycetidae</taxon>
        <taxon>Eurotiales</taxon>
        <taxon>Aspergillaceae</taxon>
        <taxon>Aspergillus</taxon>
        <taxon>Aspergillus subgen. Circumdati</taxon>
    </lineage>
</organism>
<evidence type="ECO:0000255" key="1">
    <source>
        <dbReference type="HAMAP-Rule" id="MF_03101"/>
    </source>
</evidence>
<evidence type="ECO:0000256" key="2">
    <source>
        <dbReference type="SAM" id="MobiDB-lite"/>
    </source>
</evidence>
<evidence type="ECO:0000305" key="3"/>
<name>DOHH_ASPOR</name>
<proteinExistence type="inferred from homology"/>
<keyword id="KW-0963">Cytoplasm</keyword>
<keyword id="KW-0386">Hypusine biosynthesis</keyword>
<keyword id="KW-0408">Iron</keyword>
<keyword id="KW-0479">Metal-binding</keyword>
<keyword id="KW-0503">Monooxygenase</keyword>
<keyword id="KW-0539">Nucleus</keyword>
<keyword id="KW-0560">Oxidoreductase</keyword>
<keyword id="KW-1185">Reference proteome</keyword>
<keyword id="KW-0677">Repeat</keyword>
<feature type="chain" id="PRO_0000283657" description="Deoxyhypusine hydroxylase">
    <location>
        <begin position="1"/>
        <end position="339"/>
    </location>
</feature>
<feature type="repeat" description="HEAT-like PBS-type 1">
    <location>
        <begin position="71"/>
        <end position="97"/>
    </location>
</feature>
<feature type="repeat" description="HEAT-like PBS-type 2">
    <location>
        <begin position="104"/>
        <end position="130"/>
    </location>
</feature>
<feature type="repeat" description="HEAT-like PBS-type 3">
    <location>
        <begin position="200"/>
        <end position="233"/>
    </location>
</feature>
<feature type="repeat" description="HEAT-like PBS-type 4">
    <location>
        <begin position="238"/>
        <end position="264"/>
    </location>
</feature>
<feature type="repeat" description="HEAT-like PBS-type 5">
    <location>
        <begin position="271"/>
        <end position="298"/>
    </location>
</feature>
<feature type="region of interest" description="Disordered" evidence="2">
    <location>
        <begin position="159"/>
        <end position="183"/>
    </location>
</feature>
<feature type="binding site" evidence="1">
    <location>
        <position position="73"/>
    </location>
    <ligand>
        <name>Fe cation</name>
        <dbReference type="ChEBI" id="CHEBI:24875"/>
        <label>1</label>
    </ligand>
</feature>
<feature type="binding site" evidence="1">
    <location>
        <position position="74"/>
    </location>
    <ligand>
        <name>Fe cation</name>
        <dbReference type="ChEBI" id="CHEBI:24875"/>
        <label>1</label>
    </ligand>
</feature>
<feature type="binding site" evidence="1">
    <location>
        <position position="106"/>
    </location>
    <ligand>
        <name>Fe cation</name>
        <dbReference type="ChEBI" id="CHEBI:24875"/>
        <label>1</label>
    </ligand>
</feature>
<feature type="binding site" evidence="1">
    <location>
        <position position="107"/>
    </location>
    <ligand>
        <name>Fe cation</name>
        <dbReference type="ChEBI" id="CHEBI:24875"/>
        <label>1</label>
    </ligand>
</feature>
<feature type="binding site" evidence="1">
    <location>
        <position position="240"/>
    </location>
    <ligand>
        <name>Fe cation</name>
        <dbReference type="ChEBI" id="CHEBI:24875"/>
        <label>2</label>
    </ligand>
</feature>
<feature type="binding site" evidence="1">
    <location>
        <position position="241"/>
    </location>
    <ligand>
        <name>Fe cation</name>
        <dbReference type="ChEBI" id="CHEBI:24875"/>
        <label>2</label>
    </ligand>
</feature>
<feature type="binding site" evidence="1">
    <location>
        <position position="273"/>
    </location>
    <ligand>
        <name>Fe cation</name>
        <dbReference type="ChEBI" id="CHEBI:24875"/>
        <label>2</label>
    </ligand>
</feature>
<feature type="binding site" evidence="1">
    <location>
        <position position="274"/>
    </location>
    <ligand>
        <name>Fe cation</name>
        <dbReference type="ChEBI" id="CHEBI:24875"/>
        <label>2</label>
    </ligand>
</feature>
<gene>
    <name type="primary">lia1</name>
    <name type="ORF">AO090001000660</name>
</gene>
<sequence length="339" mass="36986">MASSAVDQPEGVDETILTLRKVLVNESEPLARRFRALFSLKYIACLQPPTEKTLPAIQAIAAGFTSSSALLKHELAYCLGQTRNPDAVSYLLEVVKNTEQDAMCRHEAAEGLGALGFDTSLDVLKALRDDEKEEDVIRETCDIAVDRILWENSEERKSEKLKPSDFTSIDPAPPLPMASSQPSISDLEKTLLDTKLPLFQRYRAMFALRDLASPPDLPTAVEAVEALAKGLKDPSALFRHEVAFVFGQLCHPASVPSLTETLSDQKEMGMVRHEAAEALGSLGDVEGVEDTLKKFLNDPEQVVRDSIIVALDMAEYEKNGEMEYALVPDSAAPAAVSAA</sequence>
<protein>
    <recommendedName>
        <fullName evidence="1">Deoxyhypusine hydroxylase</fullName>
        <shortName evidence="1">DOHH</shortName>
        <ecNumber evidence="1">1.14.99.29</ecNumber>
    </recommendedName>
    <alternativeName>
        <fullName evidence="1">Deoxyhypusine dioxygenase</fullName>
    </alternativeName>
    <alternativeName>
        <fullName evidence="1">Deoxyhypusine monooxygenase</fullName>
    </alternativeName>
</protein>
<reference key="1">
    <citation type="journal article" date="2005" name="Nature">
        <title>Genome sequencing and analysis of Aspergillus oryzae.</title>
        <authorList>
            <person name="Machida M."/>
            <person name="Asai K."/>
            <person name="Sano M."/>
            <person name="Tanaka T."/>
            <person name="Kumagai T."/>
            <person name="Terai G."/>
            <person name="Kusumoto K."/>
            <person name="Arima T."/>
            <person name="Akita O."/>
            <person name="Kashiwagi Y."/>
            <person name="Abe K."/>
            <person name="Gomi K."/>
            <person name="Horiuchi H."/>
            <person name="Kitamoto K."/>
            <person name="Kobayashi T."/>
            <person name="Takeuchi M."/>
            <person name="Denning D.W."/>
            <person name="Galagan J.E."/>
            <person name="Nierman W.C."/>
            <person name="Yu J."/>
            <person name="Archer D.B."/>
            <person name="Bennett J.W."/>
            <person name="Bhatnagar D."/>
            <person name="Cleveland T.E."/>
            <person name="Fedorova N.D."/>
            <person name="Gotoh O."/>
            <person name="Horikawa H."/>
            <person name="Hosoyama A."/>
            <person name="Ichinomiya M."/>
            <person name="Igarashi R."/>
            <person name="Iwashita K."/>
            <person name="Juvvadi P.R."/>
            <person name="Kato M."/>
            <person name="Kato Y."/>
            <person name="Kin T."/>
            <person name="Kokubun A."/>
            <person name="Maeda H."/>
            <person name="Maeyama N."/>
            <person name="Maruyama J."/>
            <person name="Nagasaki H."/>
            <person name="Nakajima T."/>
            <person name="Oda K."/>
            <person name="Okada K."/>
            <person name="Paulsen I."/>
            <person name="Sakamoto K."/>
            <person name="Sawano T."/>
            <person name="Takahashi M."/>
            <person name="Takase K."/>
            <person name="Terabayashi Y."/>
            <person name="Wortman J.R."/>
            <person name="Yamada O."/>
            <person name="Yamagata Y."/>
            <person name="Anazawa H."/>
            <person name="Hata Y."/>
            <person name="Koide Y."/>
            <person name="Komori T."/>
            <person name="Koyama Y."/>
            <person name="Minetoki T."/>
            <person name="Suharnan S."/>
            <person name="Tanaka A."/>
            <person name="Isono K."/>
            <person name="Kuhara S."/>
            <person name="Ogasawara N."/>
            <person name="Kikuchi H."/>
        </authorList>
    </citation>
    <scope>NUCLEOTIDE SEQUENCE [LARGE SCALE GENOMIC DNA]</scope>
    <source>
        <strain>ATCC 42149 / RIB 40</strain>
    </source>
</reference>
<accession>Q2UMQ8</accession>
<comment type="function">
    <text evidence="1">Catalyzes the hydroxylation of the N(6)-(4-aminobutyl)-L-lysine intermediate to form hypusine, an essential post-translational modification only found in mature eIF-5A factor.</text>
</comment>
<comment type="catalytic activity">
    <reaction evidence="1">
        <text>[eIF5A protein]-deoxyhypusine + AH2 + O2 = [eIF5A protein]-hypusine + A + H2O</text>
        <dbReference type="Rhea" id="RHEA:14101"/>
        <dbReference type="Rhea" id="RHEA-COMP:10144"/>
        <dbReference type="Rhea" id="RHEA-COMP:12592"/>
        <dbReference type="ChEBI" id="CHEBI:13193"/>
        <dbReference type="ChEBI" id="CHEBI:15377"/>
        <dbReference type="ChEBI" id="CHEBI:15379"/>
        <dbReference type="ChEBI" id="CHEBI:17499"/>
        <dbReference type="ChEBI" id="CHEBI:82657"/>
        <dbReference type="ChEBI" id="CHEBI:91175"/>
        <dbReference type="EC" id="1.14.99.29"/>
    </reaction>
</comment>
<comment type="cofactor">
    <cofactor evidence="1">
        <name>Fe(2+)</name>
        <dbReference type="ChEBI" id="CHEBI:29033"/>
    </cofactor>
    <text evidence="1">Binds 2 Fe(2+) ions per subunit.</text>
</comment>
<comment type="pathway">
    <text evidence="1">Protein modification; eIF5A hypusination.</text>
</comment>
<comment type="subcellular location">
    <subcellularLocation>
        <location evidence="1">Cytoplasm</location>
    </subcellularLocation>
    <subcellularLocation>
        <location evidence="1">Nucleus</location>
    </subcellularLocation>
</comment>
<comment type="similarity">
    <text evidence="1">Belongs to the deoxyhypusine hydroxylase family.</text>
</comment>
<comment type="sequence caution" evidence="3">
    <conflict type="erroneous gene model prediction">
        <sequence resource="EMBL-CDS" id="BAE57157"/>
    </conflict>
</comment>
<dbReference type="EC" id="1.14.99.29" evidence="1"/>
<dbReference type="EMBL" id="BA000050">
    <property type="protein sequence ID" value="BAE57157.1"/>
    <property type="status" value="ALT_SEQ"/>
    <property type="molecule type" value="Genomic_DNA"/>
</dbReference>
<dbReference type="RefSeq" id="XP_001819159.2">
    <property type="nucleotide sequence ID" value="XM_001819107.2"/>
</dbReference>
<dbReference type="SMR" id="Q2UMQ8"/>
<dbReference type="STRING" id="510516.Q2UMQ8"/>
<dbReference type="VEuPathDB" id="FungiDB:AO090001000660"/>
<dbReference type="OMA" id="LQEPCSI"/>
<dbReference type="UniPathway" id="UPA00354"/>
<dbReference type="Proteomes" id="UP000006564">
    <property type="component" value="Chromosome 2"/>
</dbReference>
<dbReference type="GO" id="GO:0005737">
    <property type="term" value="C:cytoplasm"/>
    <property type="evidence" value="ECO:0007669"/>
    <property type="project" value="UniProtKB-SubCell"/>
</dbReference>
<dbReference type="GO" id="GO:0005634">
    <property type="term" value="C:nucleus"/>
    <property type="evidence" value="ECO:0007669"/>
    <property type="project" value="UniProtKB-SubCell"/>
</dbReference>
<dbReference type="GO" id="GO:0019135">
    <property type="term" value="F:deoxyhypusine monooxygenase activity"/>
    <property type="evidence" value="ECO:0007669"/>
    <property type="project" value="UniProtKB-UniRule"/>
</dbReference>
<dbReference type="GO" id="GO:0046872">
    <property type="term" value="F:metal ion binding"/>
    <property type="evidence" value="ECO:0007669"/>
    <property type="project" value="UniProtKB-KW"/>
</dbReference>
<dbReference type="Gene3D" id="1.25.10.10">
    <property type="entry name" value="Leucine-rich Repeat Variant"/>
    <property type="match status" value="2"/>
</dbReference>
<dbReference type="HAMAP" id="MF_03101">
    <property type="entry name" value="Deoxyhypusine_hydroxylase"/>
    <property type="match status" value="1"/>
</dbReference>
<dbReference type="InterPro" id="IPR011989">
    <property type="entry name" value="ARM-like"/>
</dbReference>
<dbReference type="InterPro" id="IPR016024">
    <property type="entry name" value="ARM-type_fold"/>
</dbReference>
<dbReference type="InterPro" id="IPR027517">
    <property type="entry name" value="Deoxyhypusine_hydroxylase"/>
</dbReference>
<dbReference type="InterPro" id="IPR021133">
    <property type="entry name" value="HEAT_type_2"/>
</dbReference>
<dbReference type="InterPro" id="IPR004155">
    <property type="entry name" value="PBS_lyase_HEAT"/>
</dbReference>
<dbReference type="PANTHER" id="PTHR12697:SF5">
    <property type="entry name" value="DEOXYHYPUSINE HYDROXYLASE"/>
    <property type="match status" value="1"/>
</dbReference>
<dbReference type="PANTHER" id="PTHR12697">
    <property type="entry name" value="PBS LYASE HEAT-LIKE PROTEIN"/>
    <property type="match status" value="1"/>
</dbReference>
<dbReference type="Pfam" id="PF13646">
    <property type="entry name" value="HEAT_2"/>
    <property type="match status" value="2"/>
</dbReference>
<dbReference type="SMART" id="SM00567">
    <property type="entry name" value="EZ_HEAT"/>
    <property type="match status" value="5"/>
</dbReference>
<dbReference type="SUPFAM" id="SSF48371">
    <property type="entry name" value="ARM repeat"/>
    <property type="match status" value="1"/>
</dbReference>
<dbReference type="PROSITE" id="PS50077">
    <property type="entry name" value="HEAT_REPEAT"/>
    <property type="match status" value="1"/>
</dbReference>